<gene>
    <name type="primary">Lrrn3</name>
    <name type="synonym">Nlrr3</name>
</gene>
<protein>
    <recommendedName>
        <fullName>Leucine-rich repeat neuronal protein 3</fullName>
    </recommendedName>
    <alternativeName>
        <fullName>Neuronal leucine-rich repeat protein 3</fullName>
        <shortName>NLRR-3</shortName>
    </alternativeName>
</protein>
<proteinExistence type="evidence at transcript level"/>
<sequence length="707" mass="79064">MKDAPLQIHVLLGLAITALVQAGDKKVDCPQLCTCEIRPWFTPRSIYMEASTVDCNDLGLLNFPARLPADTQILLLQTNNIARIEHSTDFPVNLTGLDLSQNNLSSVTNINVQKMSQLLSVYLEENKLTELPEKCLYGLSNLQELYVNHNLLSAISPGAFVGLHNLLRLHLNSNRLQMINSKWFEALPNLEILMLGDNPILRIKDMNFQPLLKLRSLVIAGINLTEVPDDALVGLENLESISFYDNRLNKVPQVALQKAVNLKFLDLNKNPINRIRRGDFSNMLHLKELGINNMPELVSIDSLAVDNLPDLRKIEATNNPRLSYIHPNAFFRLPKLESLMLNSNALSALYHGTIESLPNLKEISIHSNPIRCDCVIRWINMNKTNIRFMEPDSLFCVDPPEFQGQNVRQVHFRDMMEICLPLIAPESFPSILDVEADSYVSLHCRATAEPQPEIYWITPSGKRLLPNTLREKFYVHSEGTLDIRGITPKEGGLYTCIATNLVGADLKSIMIKVGGFVPQDNNGSLNIKIRDIRANSVLVSWKANSKILKSSVKWTAFVKTEDSQAAQSARIPSDVKVYNLTHLKPSTEYKICIDIPTIYQKSRKQCVNVTTKSLEHDGKENGKSHTVFVACVGGLLGIIGVMCLFGCVSQEGNCENEHSYTVNHCHKPTLAFSELYPPLINLWESSKEKPASLEVKATAIGVPTSMS</sequence>
<feature type="signal peptide" evidence="1">
    <location>
        <begin position="1"/>
        <end position="22"/>
    </location>
</feature>
<feature type="chain" id="PRO_0000045825" description="Leucine-rich repeat neuronal protein 3">
    <location>
        <begin position="23"/>
        <end position="707"/>
    </location>
</feature>
<feature type="topological domain" description="Extracellular" evidence="1">
    <location>
        <begin position="23"/>
        <end position="626"/>
    </location>
</feature>
<feature type="transmembrane region" description="Helical" evidence="1">
    <location>
        <begin position="627"/>
        <end position="647"/>
    </location>
</feature>
<feature type="topological domain" description="Cytoplasmic" evidence="1">
    <location>
        <begin position="648"/>
        <end position="707"/>
    </location>
</feature>
<feature type="domain" description="LRRNT">
    <location>
        <begin position="23"/>
        <end position="69"/>
    </location>
</feature>
<feature type="repeat" description="LRR 1">
    <location>
        <begin position="70"/>
        <end position="91"/>
    </location>
</feature>
<feature type="repeat" description="LRR 2">
    <location>
        <begin position="93"/>
        <end position="114"/>
    </location>
</feature>
<feature type="repeat" description="LRR 3">
    <location>
        <begin position="117"/>
        <end position="138"/>
    </location>
</feature>
<feature type="repeat" description="LRR 4">
    <location>
        <begin position="141"/>
        <end position="162"/>
    </location>
</feature>
<feature type="repeat" description="LRR 5">
    <location>
        <begin position="165"/>
        <end position="186"/>
    </location>
</feature>
<feature type="repeat" description="LRR 6">
    <location>
        <begin position="189"/>
        <end position="210"/>
    </location>
</feature>
<feature type="repeat" description="LRR 7">
    <location>
        <begin position="213"/>
        <end position="234"/>
    </location>
</feature>
<feature type="repeat" description="LRR 8">
    <location>
        <begin position="237"/>
        <end position="258"/>
    </location>
</feature>
<feature type="repeat" description="LRR 9">
    <location>
        <begin position="261"/>
        <end position="282"/>
    </location>
</feature>
<feature type="repeat" description="LRR 10">
    <location>
        <begin position="285"/>
        <end position="304"/>
    </location>
</feature>
<feature type="repeat" description="LRR 11">
    <location>
        <begin position="310"/>
        <end position="332"/>
    </location>
</feature>
<feature type="repeat" description="LRR 12">
    <location>
        <begin position="335"/>
        <end position="358"/>
    </location>
</feature>
<feature type="domain" description="LRRCT">
    <location>
        <begin position="368"/>
        <end position="421"/>
    </location>
</feature>
<feature type="domain" description="Ig-like C2-type">
    <location>
        <begin position="421"/>
        <end position="514"/>
    </location>
</feature>
<feature type="domain" description="Fibronectin type-III" evidence="3">
    <location>
        <begin position="523"/>
        <end position="614"/>
    </location>
</feature>
<feature type="glycosylation site" description="N-linked (GlcNAc...) asparagine" evidence="1">
    <location>
        <position position="93"/>
    </location>
</feature>
<feature type="glycosylation site" description="N-linked (GlcNAc...) asparagine" evidence="1">
    <location>
        <position position="103"/>
    </location>
</feature>
<feature type="glycosylation site" description="N-linked (GlcNAc...) asparagine" evidence="1">
    <location>
        <position position="223"/>
    </location>
</feature>
<feature type="glycosylation site" description="N-linked (GlcNAc...) asparagine" evidence="1">
    <location>
        <position position="382"/>
    </location>
</feature>
<feature type="glycosylation site" description="N-linked (GlcNAc...) asparagine" evidence="1">
    <location>
        <position position="522"/>
    </location>
</feature>
<feature type="glycosylation site" description="N-linked (GlcNAc...) asparagine" evidence="1">
    <location>
        <position position="579"/>
    </location>
</feature>
<feature type="glycosylation site" description="N-linked (GlcNAc...) asparagine" evidence="1">
    <location>
        <position position="608"/>
    </location>
</feature>
<feature type="disulfide bond" evidence="2">
    <location>
        <begin position="444"/>
        <end position="496"/>
    </location>
</feature>
<feature type="sequence conflict" description="In Ref. 2; AAH81791." evidence="4" ref="2">
    <original>S</original>
    <variation>L</variation>
    <location>
        <position position="51"/>
    </location>
</feature>
<feature type="sequence conflict" description="In Ref. 2; AAH81791." evidence="4" ref="2">
    <original>D</original>
    <variation>G</variation>
    <location>
        <position position="229"/>
    </location>
</feature>
<feature type="sequence conflict" description="In Ref. 2; AAH81791." evidence="4" ref="2">
    <original>N</original>
    <variation>S</variation>
    <location>
        <position position="656"/>
    </location>
</feature>
<name>LRRN3_RAT</name>
<comment type="subcellular location">
    <subcellularLocation>
        <location evidence="4">Membrane</location>
        <topology evidence="4">Single-pass type I membrane protein</topology>
    </subcellularLocation>
</comment>
<dbReference type="EMBL" id="AF291437">
    <property type="protein sequence ID" value="AAG00604.1"/>
    <property type="molecule type" value="mRNA"/>
</dbReference>
<dbReference type="EMBL" id="BC081791">
    <property type="protein sequence ID" value="AAH81791.1"/>
    <property type="molecule type" value="mRNA"/>
</dbReference>
<dbReference type="PIR" id="JC7763">
    <property type="entry name" value="JC7763"/>
</dbReference>
<dbReference type="RefSeq" id="NP_110483.1">
    <property type="nucleotide sequence ID" value="NM_030856.1"/>
</dbReference>
<dbReference type="SMR" id="Q9ESY6"/>
<dbReference type="FunCoup" id="Q9ESY6">
    <property type="interactions" value="268"/>
</dbReference>
<dbReference type="STRING" id="10116.ENSRNOP00000008655"/>
<dbReference type="GlyCosmos" id="Q9ESY6">
    <property type="glycosylation" value="7 sites, No reported glycans"/>
</dbReference>
<dbReference type="GlyGen" id="Q9ESY6">
    <property type="glycosylation" value="7 sites"/>
</dbReference>
<dbReference type="PhosphoSitePlus" id="Q9ESY6"/>
<dbReference type="PaxDb" id="10116-ENSRNOP00000008655"/>
<dbReference type="GeneID" id="81514"/>
<dbReference type="KEGG" id="rno:81514"/>
<dbReference type="UCSC" id="RGD:71066">
    <property type="organism name" value="rat"/>
</dbReference>
<dbReference type="AGR" id="RGD:71066"/>
<dbReference type="CTD" id="54674"/>
<dbReference type="RGD" id="71066">
    <property type="gene designation" value="Lrrn3"/>
</dbReference>
<dbReference type="eggNOG" id="KOG0619">
    <property type="taxonomic scope" value="Eukaryota"/>
</dbReference>
<dbReference type="InParanoid" id="Q9ESY6"/>
<dbReference type="PhylomeDB" id="Q9ESY6"/>
<dbReference type="TreeFam" id="TF334360"/>
<dbReference type="PRO" id="PR:Q9ESY6"/>
<dbReference type="Proteomes" id="UP000002494">
    <property type="component" value="Unplaced"/>
</dbReference>
<dbReference type="GO" id="GO:0030131">
    <property type="term" value="C:clathrin adaptor complex"/>
    <property type="evidence" value="ECO:0000314"/>
    <property type="project" value="RGD"/>
</dbReference>
<dbReference type="GO" id="GO:0031012">
    <property type="term" value="C:extracellular matrix"/>
    <property type="evidence" value="ECO:0000318"/>
    <property type="project" value="GO_Central"/>
</dbReference>
<dbReference type="GO" id="GO:0005615">
    <property type="term" value="C:extracellular space"/>
    <property type="evidence" value="ECO:0000318"/>
    <property type="project" value="GO_Central"/>
</dbReference>
<dbReference type="GO" id="GO:0044877">
    <property type="term" value="F:protein-containing complex binding"/>
    <property type="evidence" value="ECO:0000314"/>
    <property type="project" value="RGD"/>
</dbReference>
<dbReference type="GO" id="GO:0051965">
    <property type="term" value="P:positive regulation of synapse assembly"/>
    <property type="evidence" value="ECO:0000266"/>
    <property type="project" value="RGD"/>
</dbReference>
<dbReference type="CDD" id="cd00063">
    <property type="entry name" value="FN3"/>
    <property type="match status" value="1"/>
</dbReference>
<dbReference type="FunFam" id="2.60.40.10:FF:000355">
    <property type="entry name" value="Leucine-rich repeat neuronal protein 1"/>
    <property type="match status" value="1"/>
</dbReference>
<dbReference type="FunFam" id="2.60.40.10:FF:000481">
    <property type="entry name" value="Leucine-rich repeat neuronal protein 1"/>
    <property type="match status" value="1"/>
</dbReference>
<dbReference type="FunFam" id="3.80.10.10:FF:000056">
    <property type="entry name" value="Leucine-rich repeat neuronal protein 1"/>
    <property type="match status" value="1"/>
</dbReference>
<dbReference type="FunFam" id="3.80.10.10:FF:000074">
    <property type="entry name" value="Leucine-rich repeat neuronal protein 1"/>
    <property type="match status" value="1"/>
</dbReference>
<dbReference type="Gene3D" id="2.60.40.10">
    <property type="entry name" value="Immunoglobulins"/>
    <property type="match status" value="2"/>
</dbReference>
<dbReference type="Gene3D" id="3.80.10.10">
    <property type="entry name" value="Ribonuclease Inhibitor"/>
    <property type="match status" value="3"/>
</dbReference>
<dbReference type="InterPro" id="IPR000483">
    <property type="entry name" value="Cys-rich_flank_reg_C"/>
</dbReference>
<dbReference type="InterPro" id="IPR003961">
    <property type="entry name" value="FN3_dom"/>
</dbReference>
<dbReference type="InterPro" id="IPR036116">
    <property type="entry name" value="FN3_sf"/>
</dbReference>
<dbReference type="InterPro" id="IPR007110">
    <property type="entry name" value="Ig-like_dom"/>
</dbReference>
<dbReference type="InterPro" id="IPR036179">
    <property type="entry name" value="Ig-like_dom_sf"/>
</dbReference>
<dbReference type="InterPro" id="IPR013783">
    <property type="entry name" value="Ig-like_fold"/>
</dbReference>
<dbReference type="InterPro" id="IPR003599">
    <property type="entry name" value="Ig_sub"/>
</dbReference>
<dbReference type="InterPro" id="IPR003598">
    <property type="entry name" value="Ig_sub2"/>
</dbReference>
<dbReference type="InterPro" id="IPR001611">
    <property type="entry name" value="Leu-rich_rpt"/>
</dbReference>
<dbReference type="InterPro" id="IPR003591">
    <property type="entry name" value="Leu-rich_rpt_typical-subtyp"/>
</dbReference>
<dbReference type="InterPro" id="IPR032675">
    <property type="entry name" value="LRR_dom_sf"/>
</dbReference>
<dbReference type="InterPro" id="IPR000372">
    <property type="entry name" value="LRRNT"/>
</dbReference>
<dbReference type="InterPro" id="IPR050333">
    <property type="entry name" value="SLRP"/>
</dbReference>
<dbReference type="PANTHER" id="PTHR45712">
    <property type="entry name" value="AGAP008170-PA"/>
    <property type="match status" value="1"/>
</dbReference>
<dbReference type="PANTHER" id="PTHR45712:SF22">
    <property type="entry name" value="INSULIN-LIKE GROWTH FACTOR-BINDING PROTEIN COMPLEX ACID LABILE SUBUNIT"/>
    <property type="match status" value="1"/>
</dbReference>
<dbReference type="Pfam" id="PF00041">
    <property type="entry name" value="fn3"/>
    <property type="match status" value="1"/>
</dbReference>
<dbReference type="Pfam" id="PF13927">
    <property type="entry name" value="Ig_3"/>
    <property type="match status" value="1"/>
</dbReference>
<dbReference type="Pfam" id="PF13855">
    <property type="entry name" value="LRR_8"/>
    <property type="match status" value="3"/>
</dbReference>
<dbReference type="SMART" id="SM00409">
    <property type="entry name" value="IG"/>
    <property type="match status" value="1"/>
</dbReference>
<dbReference type="SMART" id="SM00408">
    <property type="entry name" value="IGc2"/>
    <property type="match status" value="1"/>
</dbReference>
<dbReference type="SMART" id="SM00365">
    <property type="entry name" value="LRR_SD22"/>
    <property type="match status" value="4"/>
</dbReference>
<dbReference type="SMART" id="SM00369">
    <property type="entry name" value="LRR_TYP"/>
    <property type="match status" value="8"/>
</dbReference>
<dbReference type="SMART" id="SM00082">
    <property type="entry name" value="LRRCT"/>
    <property type="match status" value="1"/>
</dbReference>
<dbReference type="SMART" id="SM00013">
    <property type="entry name" value="LRRNT"/>
    <property type="match status" value="1"/>
</dbReference>
<dbReference type="SUPFAM" id="SSF49265">
    <property type="entry name" value="Fibronectin type III"/>
    <property type="match status" value="1"/>
</dbReference>
<dbReference type="SUPFAM" id="SSF48726">
    <property type="entry name" value="Immunoglobulin"/>
    <property type="match status" value="1"/>
</dbReference>
<dbReference type="SUPFAM" id="SSF52058">
    <property type="entry name" value="L domain-like"/>
    <property type="match status" value="1"/>
</dbReference>
<dbReference type="PROSITE" id="PS50853">
    <property type="entry name" value="FN3"/>
    <property type="match status" value="1"/>
</dbReference>
<dbReference type="PROSITE" id="PS50835">
    <property type="entry name" value="IG_LIKE"/>
    <property type="match status" value="1"/>
</dbReference>
<dbReference type="PROSITE" id="PS51450">
    <property type="entry name" value="LRR"/>
    <property type="match status" value="9"/>
</dbReference>
<reference key="1">
    <citation type="journal article" date="2001" name="Biochem. Biophys. Res. Commun.">
        <title>Rat neuronal leucine-rich repeat protein-3: cloning and regulation of the gene expression.</title>
        <authorList>
            <person name="Fukamachi K."/>
            <person name="Matsuoka Y."/>
            <person name="Kitanaka C."/>
            <person name="Kuchino Y."/>
            <person name="Tsuda H."/>
        </authorList>
    </citation>
    <scope>NUCLEOTIDE SEQUENCE [MRNA]</scope>
    <source>
        <strain>Sprague-Dawley</strain>
    </source>
</reference>
<reference key="2">
    <citation type="journal article" date="2004" name="Genome Res.">
        <title>The status, quality, and expansion of the NIH full-length cDNA project: the Mammalian Gene Collection (MGC).</title>
        <authorList>
            <consortium name="The MGC Project Team"/>
        </authorList>
    </citation>
    <scope>NUCLEOTIDE SEQUENCE [LARGE SCALE MRNA]</scope>
    <source>
        <tissue>Lung</tissue>
    </source>
</reference>
<keyword id="KW-1015">Disulfide bond</keyword>
<keyword id="KW-0325">Glycoprotein</keyword>
<keyword id="KW-0393">Immunoglobulin domain</keyword>
<keyword id="KW-0433">Leucine-rich repeat</keyword>
<keyword id="KW-0472">Membrane</keyword>
<keyword id="KW-1185">Reference proteome</keyword>
<keyword id="KW-0677">Repeat</keyword>
<keyword id="KW-0732">Signal</keyword>
<keyword id="KW-0812">Transmembrane</keyword>
<keyword id="KW-1133">Transmembrane helix</keyword>
<accession>Q9ESY6</accession>
<accession>Q642E4</accession>
<organism>
    <name type="scientific">Rattus norvegicus</name>
    <name type="common">Rat</name>
    <dbReference type="NCBI Taxonomy" id="10116"/>
    <lineage>
        <taxon>Eukaryota</taxon>
        <taxon>Metazoa</taxon>
        <taxon>Chordata</taxon>
        <taxon>Craniata</taxon>
        <taxon>Vertebrata</taxon>
        <taxon>Euteleostomi</taxon>
        <taxon>Mammalia</taxon>
        <taxon>Eutheria</taxon>
        <taxon>Euarchontoglires</taxon>
        <taxon>Glires</taxon>
        <taxon>Rodentia</taxon>
        <taxon>Myomorpha</taxon>
        <taxon>Muroidea</taxon>
        <taxon>Muridae</taxon>
        <taxon>Murinae</taxon>
        <taxon>Rattus</taxon>
    </lineage>
</organism>
<evidence type="ECO:0000255" key="1"/>
<evidence type="ECO:0000255" key="2">
    <source>
        <dbReference type="PROSITE-ProRule" id="PRU00114"/>
    </source>
</evidence>
<evidence type="ECO:0000255" key="3">
    <source>
        <dbReference type="PROSITE-ProRule" id="PRU00316"/>
    </source>
</evidence>
<evidence type="ECO:0000305" key="4"/>